<gene>
    <name type="primary">Lamb2</name>
</gene>
<reference key="1">
    <citation type="journal article" date="1989" name="Nature">
        <title>A laminin-like adhesive protein concentrated in the synaptic cleft of the neuromuscular junction.</title>
        <authorList>
            <person name="Hunter D.D."/>
            <person name="Shah V."/>
            <person name="Merlie J.P."/>
            <person name="Sanes J.R."/>
        </authorList>
    </citation>
    <scope>NUCLEOTIDE SEQUENCE [MRNA]</scope>
    <source>
        <tissue>Liver</tissue>
    </source>
</reference>
<reference key="2">
    <citation type="journal article" date="2013" name="J. Proteome Res.">
        <title>Site-specific glycan-peptide analysis for determination of N-glycoproteome heterogeneity.</title>
        <authorList>
            <person name="Parker B.L."/>
            <person name="Thaysen-Andersen M."/>
            <person name="Solis N."/>
            <person name="Scott N.E."/>
            <person name="Larsen M.R."/>
            <person name="Graham M.E."/>
            <person name="Packer N.H."/>
            <person name="Cordwell S.J."/>
        </authorList>
    </citation>
    <scope>GLYCOSYLATION [LARGE SCALE ANALYSIS] AT ASN-1088 AND ASN-1351</scope>
    <scope>IDENTIFICATION BY MASS SPECTROMETRY [LARGE SCALE ANALYSIS]</scope>
    <source>
        <tissue>Brain</tissue>
    </source>
</reference>
<organism>
    <name type="scientific">Rattus norvegicus</name>
    <name type="common">Rat</name>
    <dbReference type="NCBI Taxonomy" id="10116"/>
    <lineage>
        <taxon>Eukaryota</taxon>
        <taxon>Metazoa</taxon>
        <taxon>Chordata</taxon>
        <taxon>Craniata</taxon>
        <taxon>Vertebrata</taxon>
        <taxon>Euteleostomi</taxon>
        <taxon>Mammalia</taxon>
        <taxon>Eutheria</taxon>
        <taxon>Euarchontoglires</taxon>
        <taxon>Glires</taxon>
        <taxon>Rodentia</taxon>
        <taxon>Myomorpha</taxon>
        <taxon>Muroidea</taxon>
        <taxon>Muridae</taxon>
        <taxon>Murinae</taxon>
        <taxon>Rattus</taxon>
    </lineage>
</organism>
<comment type="function">
    <text>Binding to cells via a high affinity receptor, laminin is thought to mediate the attachment, migration and organization of cells into tissues during embryonic development by interacting with other extracellular matrix components.</text>
</comment>
<comment type="subunit">
    <text>Laminin is a complex glycoprotein, consisting of three different polypeptide chains (alpha, beta, gamma), which are bound to each other by disulfide bonds into a cross-shaped molecule comprising one long and three short arms with globules at each end. Beta-2 is a subunit of laminin-3 (laminin-121 or S-laminin), laminin-4 (laminin-221 or S-merosin), laminin-7 (laminin-321 or KS-laminin), laminin-9 (laminin-421), laminin-11 (laminin-521), laminin-14 (laminin-423) and laminin-15 (laminin-523).</text>
</comment>
<comment type="subcellular location">
    <subcellularLocation>
        <location>Secreted</location>
        <location>Extracellular space</location>
        <location>Extracellular matrix</location>
        <location>Basement membrane</location>
    </subcellularLocation>
</comment>
<comment type="tissue specificity">
    <text>Found in the basement membranes (major component). S-laminin is concentrated in the synaptic cleft of the neuromuscular junction.</text>
</comment>
<comment type="domain">
    <text>The alpha-helical domains I and II are thought to interact with other laminin chains to form a coiled coil structure.</text>
</comment>
<comment type="domain">
    <text>Domains VI and IV are globular.</text>
</comment>
<evidence type="ECO:0000250" key="1">
    <source>
        <dbReference type="UniProtKB" id="P55268"/>
    </source>
</evidence>
<evidence type="ECO:0000255" key="2"/>
<evidence type="ECO:0000255" key="3">
    <source>
        <dbReference type="PROSITE-ProRule" id="PRU00460"/>
    </source>
</evidence>
<evidence type="ECO:0000255" key="4">
    <source>
        <dbReference type="PROSITE-ProRule" id="PRU00462"/>
    </source>
</evidence>
<evidence type="ECO:0000255" key="5">
    <source>
        <dbReference type="PROSITE-ProRule" id="PRU00466"/>
    </source>
</evidence>
<evidence type="ECO:0000256" key="6">
    <source>
        <dbReference type="SAM" id="MobiDB-lite"/>
    </source>
</evidence>
<evidence type="ECO:0000305" key="7"/>
<evidence type="ECO:0007744" key="8">
    <source>
    </source>
</evidence>
<evidence type="ECO:0007829" key="9">
    <source>
        <dbReference type="PDB" id="5LF2"/>
    </source>
</evidence>
<feature type="signal peptide">
    <location>
        <begin position="1"/>
        <end position="35"/>
    </location>
</feature>
<feature type="chain" id="PRO_0000017070" description="Laminin subunit beta-2">
    <location>
        <begin position="36"/>
        <end position="1801"/>
    </location>
</feature>
<feature type="domain" description="Laminin N-terminal" evidence="5">
    <location>
        <begin position="46"/>
        <end position="285"/>
    </location>
</feature>
<feature type="domain" description="Laminin EGF-like 1" evidence="3">
    <location>
        <begin position="286"/>
        <end position="349"/>
    </location>
</feature>
<feature type="domain" description="Laminin EGF-like 2" evidence="3">
    <location>
        <begin position="350"/>
        <end position="412"/>
    </location>
</feature>
<feature type="domain" description="Laminin EGF-like 3" evidence="3">
    <location>
        <begin position="413"/>
        <end position="472"/>
    </location>
</feature>
<feature type="domain" description="Laminin EGF-like 4" evidence="3">
    <location>
        <begin position="473"/>
        <end position="524"/>
    </location>
</feature>
<feature type="domain" description="Laminin EGF-like 5; truncated" evidence="3">
    <location>
        <begin position="525"/>
        <end position="555"/>
    </location>
</feature>
<feature type="domain" description="Laminin IV type B" evidence="4">
    <location>
        <begin position="564"/>
        <end position="780"/>
    </location>
</feature>
<feature type="domain" description="Laminin EGF-like 6" evidence="3">
    <location>
        <begin position="786"/>
        <end position="833"/>
    </location>
</feature>
<feature type="domain" description="Laminin EGF-like 7" evidence="3">
    <location>
        <begin position="834"/>
        <end position="879"/>
    </location>
</feature>
<feature type="domain" description="Laminin EGF-like 8" evidence="3">
    <location>
        <begin position="880"/>
        <end position="929"/>
    </location>
</feature>
<feature type="domain" description="Laminin EGF-like 9" evidence="3">
    <location>
        <begin position="930"/>
        <end position="988"/>
    </location>
</feature>
<feature type="domain" description="Laminin EGF-like 10" evidence="3">
    <location>
        <begin position="989"/>
        <end position="1040"/>
    </location>
</feature>
<feature type="domain" description="Laminin EGF-like 11" evidence="3">
    <location>
        <begin position="1041"/>
        <end position="1097"/>
    </location>
</feature>
<feature type="domain" description="Laminin EGF-like 12" evidence="3">
    <location>
        <begin position="1098"/>
        <end position="1145"/>
    </location>
</feature>
<feature type="domain" description="Laminin EGF-like 13" evidence="3">
    <location>
        <begin position="1146"/>
        <end position="1192"/>
    </location>
</feature>
<feature type="region of interest" description="Domain II">
    <location>
        <begin position="1193"/>
        <end position="1412"/>
    </location>
</feature>
<feature type="region of interest" description="Domain alpha">
    <location>
        <begin position="1413"/>
        <end position="1445"/>
    </location>
</feature>
<feature type="region of interest" description="Domain I">
    <location>
        <begin position="1446"/>
        <end position="1801"/>
    </location>
</feature>
<feature type="region of interest" description="Disordered" evidence="6">
    <location>
        <begin position="1684"/>
        <end position="1703"/>
    </location>
</feature>
<feature type="coiled-coil region" evidence="2">
    <location>
        <begin position="1259"/>
        <end position="1306"/>
    </location>
</feature>
<feature type="coiled-coil region" evidence="2">
    <location>
        <begin position="1475"/>
        <end position="1529"/>
    </location>
</feature>
<feature type="coiled-coil region" evidence="2">
    <location>
        <begin position="1576"/>
        <end position="1793"/>
    </location>
</feature>
<feature type="compositionally biased region" description="Low complexity" evidence="6">
    <location>
        <begin position="1684"/>
        <end position="1694"/>
    </location>
</feature>
<feature type="modified residue" description="Phosphoserine" evidence="1">
    <location>
        <position position="1535"/>
    </location>
</feature>
<feature type="glycosylation site" description="N-linked (GlcNAc...) asparagine" evidence="2">
    <location>
        <position position="251"/>
    </location>
</feature>
<feature type="glycosylation site" description="N-linked (GlcNAc...) asparagine" evidence="2">
    <location>
        <position position="371"/>
    </location>
</feature>
<feature type="glycosylation site" description="N-linked (GlcNAc...) asparagine" evidence="8">
    <location>
        <position position="1088"/>
    </location>
</feature>
<feature type="glycosylation site" description="N-linked (GlcNAc...) asparagine" evidence="2">
    <location>
        <position position="1252"/>
    </location>
</feature>
<feature type="glycosylation site" description="N-linked (GlcNAc...) asparagine" evidence="2">
    <location>
        <position position="1311"/>
    </location>
</feature>
<feature type="glycosylation site" description="N-linked (GlcNAc...) asparagine" evidence="8">
    <location>
        <position position="1351"/>
    </location>
</feature>
<feature type="glycosylation site" description="N-linked (GlcNAc...) asparagine" evidence="2">
    <location>
        <position position="1502"/>
    </location>
</feature>
<feature type="disulfide bond" evidence="3">
    <location>
        <begin position="286"/>
        <end position="295"/>
    </location>
</feature>
<feature type="disulfide bond" evidence="3">
    <location>
        <begin position="288"/>
        <end position="313"/>
    </location>
</feature>
<feature type="disulfide bond" evidence="3">
    <location>
        <begin position="315"/>
        <end position="324"/>
    </location>
</feature>
<feature type="disulfide bond" evidence="3">
    <location>
        <begin position="327"/>
        <end position="347"/>
    </location>
</feature>
<feature type="disulfide bond" evidence="3">
    <location>
        <begin position="350"/>
        <end position="359"/>
    </location>
</feature>
<feature type="disulfide bond" evidence="3">
    <location>
        <begin position="352"/>
        <end position="377"/>
    </location>
</feature>
<feature type="disulfide bond" evidence="3">
    <location>
        <begin position="380"/>
        <end position="389"/>
    </location>
</feature>
<feature type="disulfide bond" evidence="3">
    <location>
        <begin position="392"/>
        <end position="410"/>
    </location>
</feature>
<feature type="disulfide bond" evidence="3">
    <location>
        <begin position="413"/>
        <end position="426"/>
    </location>
</feature>
<feature type="disulfide bond" evidence="3">
    <location>
        <begin position="415"/>
        <end position="441"/>
    </location>
</feature>
<feature type="disulfide bond" evidence="3">
    <location>
        <begin position="443"/>
        <end position="452"/>
    </location>
</feature>
<feature type="disulfide bond" evidence="3">
    <location>
        <begin position="455"/>
        <end position="470"/>
    </location>
</feature>
<feature type="disulfide bond" evidence="3">
    <location>
        <begin position="473"/>
        <end position="487"/>
    </location>
</feature>
<feature type="disulfide bond" evidence="3">
    <location>
        <begin position="475"/>
        <end position="494"/>
    </location>
</feature>
<feature type="disulfide bond" evidence="3">
    <location>
        <begin position="496"/>
        <end position="505"/>
    </location>
</feature>
<feature type="disulfide bond" evidence="3">
    <location>
        <begin position="508"/>
        <end position="522"/>
    </location>
</feature>
<feature type="disulfide bond" evidence="3">
    <location>
        <begin position="525"/>
        <end position="537"/>
    </location>
</feature>
<feature type="disulfide bond" evidence="3">
    <location>
        <begin position="527"/>
        <end position="544"/>
    </location>
</feature>
<feature type="disulfide bond" evidence="3">
    <location>
        <begin position="546"/>
        <end position="555"/>
    </location>
</feature>
<feature type="disulfide bond" evidence="3">
    <location>
        <begin position="786"/>
        <end position="798"/>
    </location>
</feature>
<feature type="disulfide bond" evidence="3">
    <location>
        <begin position="788"/>
        <end position="805"/>
    </location>
</feature>
<feature type="disulfide bond" evidence="3">
    <location>
        <begin position="807"/>
        <end position="816"/>
    </location>
</feature>
<feature type="disulfide bond" evidence="3">
    <location>
        <begin position="819"/>
        <end position="831"/>
    </location>
</feature>
<feature type="disulfide bond" evidence="3">
    <location>
        <begin position="834"/>
        <end position="846"/>
    </location>
</feature>
<feature type="disulfide bond" evidence="3">
    <location>
        <begin position="836"/>
        <end position="853"/>
    </location>
</feature>
<feature type="disulfide bond" evidence="3">
    <location>
        <begin position="855"/>
        <end position="864"/>
    </location>
</feature>
<feature type="disulfide bond" evidence="3">
    <location>
        <begin position="867"/>
        <end position="877"/>
    </location>
</feature>
<feature type="disulfide bond" evidence="3">
    <location>
        <begin position="880"/>
        <end position="889"/>
    </location>
</feature>
<feature type="disulfide bond" evidence="3">
    <location>
        <begin position="882"/>
        <end position="896"/>
    </location>
</feature>
<feature type="disulfide bond" evidence="3">
    <location>
        <begin position="899"/>
        <end position="908"/>
    </location>
</feature>
<feature type="disulfide bond" evidence="3">
    <location>
        <begin position="911"/>
        <end position="927"/>
    </location>
</feature>
<feature type="disulfide bond" evidence="3">
    <location>
        <begin position="930"/>
        <end position="946"/>
    </location>
</feature>
<feature type="disulfide bond" evidence="3">
    <location>
        <begin position="932"/>
        <end position="957"/>
    </location>
</feature>
<feature type="disulfide bond" evidence="3">
    <location>
        <begin position="959"/>
        <end position="968"/>
    </location>
</feature>
<feature type="disulfide bond" evidence="3">
    <location>
        <begin position="971"/>
        <end position="986"/>
    </location>
</feature>
<feature type="disulfide bond" evidence="3">
    <location>
        <begin position="989"/>
        <end position="1003"/>
    </location>
</feature>
<feature type="disulfide bond" evidence="3">
    <location>
        <begin position="991"/>
        <end position="1010"/>
    </location>
</feature>
<feature type="disulfide bond" evidence="3">
    <location>
        <begin position="1013"/>
        <end position="1022"/>
    </location>
</feature>
<feature type="disulfide bond" evidence="3">
    <location>
        <begin position="1025"/>
        <end position="1038"/>
    </location>
</feature>
<feature type="disulfide bond" evidence="3">
    <location>
        <begin position="1041"/>
        <end position="1061"/>
    </location>
</feature>
<feature type="disulfide bond" evidence="3">
    <location>
        <begin position="1043"/>
        <end position="1068"/>
    </location>
</feature>
<feature type="disulfide bond" evidence="3">
    <location>
        <begin position="1070"/>
        <end position="1079"/>
    </location>
</feature>
<feature type="disulfide bond" evidence="3">
    <location>
        <begin position="1082"/>
        <end position="1095"/>
    </location>
</feature>
<feature type="disulfide bond" evidence="3">
    <location>
        <begin position="1098"/>
        <end position="1110"/>
    </location>
</feature>
<feature type="disulfide bond" evidence="3">
    <location>
        <begin position="1100"/>
        <end position="1117"/>
    </location>
</feature>
<feature type="disulfide bond" evidence="3">
    <location>
        <begin position="1119"/>
        <end position="1128"/>
    </location>
</feature>
<feature type="disulfide bond" evidence="3">
    <location>
        <begin position="1131"/>
        <end position="1143"/>
    </location>
</feature>
<feature type="disulfide bond" evidence="3">
    <location>
        <begin position="1146"/>
        <end position="1158"/>
    </location>
</feature>
<feature type="disulfide bond" evidence="3">
    <location>
        <begin position="1148"/>
        <end position="1165"/>
    </location>
</feature>
<feature type="disulfide bond" evidence="3">
    <location>
        <begin position="1167"/>
        <end position="1176"/>
    </location>
</feature>
<feature type="disulfide bond" evidence="3">
    <location>
        <begin position="1179"/>
        <end position="1190"/>
    </location>
</feature>
<feature type="disulfide bond" description="Interchain" evidence="7">
    <location>
        <position position="1193"/>
    </location>
</feature>
<feature type="disulfide bond" description="Interchain" evidence="7">
    <location>
        <position position="1196"/>
    </location>
</feature>
<feature type="disulfide bond" description="Interchain" evidence="7">
    <location>
        <position position="1800"/>
    </location>
</feature>
<feature type="turn" evidence="9">
    <location>
        <begin position="529"/>
        <end position="531"/>
    </location>
</feature>
<feature type="strand" evidence="9">
    <location>
        <begin position="532"/>
        <end position="536"/>
    </location>
</feature>
<feature type="turn" evidence="9">
    <location>
        <begin position="539"/>
        <end position="541"/>
    </location>
</feature>
<feature type="strand" evidence="9">
    <location>
        <begin position="550"/>
        <end position="552"/>
    </location>
</feature>
<feature type="strand" evidence="9">
    <location>
        <begin position="562"/>
        <end position="564"/>
    </location>
</feature>
<feature type="strand" evidence="9">
    <location>
        <begin position="570"/>
        <end position="573"/>
    </location>
</feature>
<feature type="helix" evidence="9">
    <location>
        <begin position="574"/>
        <end position="576"/>
    </location>
</feature>
<feature type="strand" evidence="9">
    <location>
        <begin position="578"/>
        <end position="580"/>
    </location>
</feature>
<feature type="strand" evidence="9">
    <location>
        <begin position="583"/>
        <end position="586"/>
    </location>
</feature>
<feature type="strand" evidence="9">
    <location>
        <begin position="601"/>
        <end position="605"/>
    </location>
</feature>
<feature type="strand" evidence="9">
    <location>
        <begin position="610"/>
        <end position="615"/>
    </location>
</feature>
<feature type="strand" evidence="9">
    <location>
        <begin position="619"/>
        <end position="631"/>
    </location>
</feature>
<feature type="strand" evidence="9">
    <location>
        <begin position="638"/>
        <end position="646"/>
    </location>
</feature>
<feature type="turn" evidence="9">
    <location>
        <begin position="656"/>
        <end position="659"/>
    </location>
</feature>
<feature type="helix" evidence="9">
    <location>
        <begin position="662"/>
        <end position="665"/>
    </location>
</feature>
<feature type="strand" evidence="9">
    <location>
        <begin position="666"/>
        <end position="671"/>
    </location>
</feature>
<feature type="strand" evidence="9">
    <location>
        <begin position="676"/>
        <end position="679"/>
    </location>
</feature>
<feature type="strand" evidence="9">
    <location>
        <begin position="684"/>
        <end position="686"/>
    </location>
</feature>
<feature type="strand" evidence="9">
    <location>
        <begin position="692"/>
        <end position="702"/>
    </location>
</feature>
<feature type="strand" evidence="9">
    <location>
        <begin position="716"/>
        <end position="725"/>
    </location>
</feature>
<feature type="helix" evidence="9">
    <location>
        <begin position="727"/>
        <end position="729"/>
    </location>
</feature>
<feature type="helix" evidence="9">
    <location>
        <begin position="731"/>
        <end position="734"/>
    </location>
</feature>
<feature type="strand" evidence="9">
    <location>
        <begin position="735"/>
        <end position="737"/>
    </location>
</feature>
<feature type="helix" evidence="9">
    <location>
        <begin position="738"/>
        <end position="749"/>
    </location>
</feature>
<feature type="helix" evidence="9">
    <location>
        <begin position="752"/>
        <end position="756"/>
    </location>
</feature>
<feature type="strand" evidence="9">
    <location>
        <begin position="757"/>
        <end position="759"/>
    </location>
</feature>
<feature type="helix" evidence="9">
    <location>
        <begin position="768"/>
        <end position="780"/>
    </location>
</feature>
<feature type="turn" evidence="9">
    <location>
        <begin position="790"/>
        <end position="792"/>
    </location>
</feature>
<feature type="turn" evidence="9">
    <location>
        <begin position="813"/>
        <end position="816"/>
    </location>
</feature>
<sequence>MEWASGKPGRGRQGQPVPWELRLGLLLSVLAATLAQVPSLDVPGCSRGSCYPATGDLLVGRADRLTASSTCGLHSPQPYCIVSHLQDEKKCFLCDSRRPFSARDNPNSHRIQNVVTSFAPQRRTAWWQSENGVPMVTIQLDLEAEFHFTHLIMTFKTFRPAAMLVERSADFGRTWRVYRYFSYDCGADFPGIPLAPPRRWDDVVCESRYSEIEPSTEGEVIYRVLDPAIPIPDPYSSRIQNLLKITNLRVNLTRLHTLGDNLLDPRREIREKYYYALYELVIRGNCFCYGHASQCAPAPGAPAHAEGMVHGACICKHNTRGLNCEQCQDFYQDLPWHPAEDGHTHACRKCECNGHSHSCHFDMAVYLASGNVSGGVCDGCQHNTAGRHCELCRPFFYRDPTKDMRDPAACRPCDCDPMGSQDGGRCDSHDDPVLGLVSGQCRCKEHVVGTRCQQCRDGFFGLSASNPRGCQRCQCNSRGTVPGGTPCDSSSGTCFCKRLVTGDGCDRCLPGHWGLSHDLLGCRPCDCDVGGALDPQCDEATGQCPCRPHMIGRRCEQVQPGYFRPFLDHLTWEAEGAHGQVLEVVERLVTNRETPSWTGVGFVRLREGQEVEFLVTSLPRAMDYDLLLRWEPQVPEQWAELELVVQRPGPVSAHSPCGHVLPRDDRIQGMLHPNTRVLVFPRPVCLEPGLSYKLKLKLTGTGGRAHPETPYSGSGILIDSLVLQPHVLMLEMFSGGDAAALERRTTFERYRCHEEGLMPSKTPLSEACVPLLISASSLVYNGALPCQCDPQGSLSSECNPHGGQCRCKPGVVGRRCDACATGYYGFGPAGCQACQCSPDGALSALCEGTSGQCLCRTGAFGLRCDHCQRGQWGFPNCRPCVCNGRADECDAHTGACLGCRDYTGGEHCERCIAGFHGDPRLPYGGQCRPCPCPEGPGSQRHFATSCHRDGYSQQIVCHCRAGYTGLRCEACAPGHFGDPSKPGGRCQLCECSGNIDPTDPGACDPHTGQCLRCLHHTEGPHCGHCKPGFHGQAARQSCHRCTCNLLGTDPQRCPSTDLCHCDPSTGQCPCLPHVQGLSCDRCAPNFWNFTSGRGCQPCACHPSRARGPTCNEFTGQCHCHAGFGGRTCSECQELHWGDPGLQCRACDCDPRGIDKPQCHRSTGHCSCRPGVSGVRCDQCARGFSGVFPACHPCHACFGDWDRVVQDLAARTRRLEQWAQELQQTGVLGAFESSFLNLQGKLGMVQAIVAARNTSAASTAKLVEATEGLRHEIGKTTERLTQLEAELTDVQDENFNANHALSGLERDGLALNLTLRQLDQHLDILKHSNFLGAYDSIRHAHSQSTEAERRANASTFAIPSPVSNSADTRRRAEVLMGAQRENFNRQHLANQQALGRLSTHTHTLSLTGVNELVCGAPGDAPCATSPCGGAGCRDEDGQPRCGGLGCSGAAATADLALGRARHTQAELQRALVEGGGILSRVSETRRQAEEAQQRAQAALDKANASRGQVEQANQELRELIQNVKDFLSQEGADPDSIEMVATRVLDISIPASPEQIQRLASEIAERVRSLADVDTILAHTMGDVRRAEQLLQDAQRARSRAEGERQKAETVQAALEEAQRAQGAAQGAIRGAVVDTKNTEQTLQQVQERMAGTEQSLNSASERARQLHALLEALKLKRAGNSLAASTAEETAGSAQSRAREAEKQLREQVGDQYQTVRALAERKAEGVLAAQARAEQLRDEARGLLQAAQDKLQRLQELEGTYEENERELEVKAAQLDGLEARMRSVLQAINLQVQIYNTCQ</sequence>
<accession>P15800</accession>
<name>LAMB2_RAT</name>
<dbReference type="EMBL" id="X16563">
    <property type="protein sequence ID" value="CAA34561.1"/>
    <property type="molecule type" value="mRNA"/>
</dbReference>
<dbReference type="PIR" id="S03539">
    <property type="entry name" value="MMRTS"/>
</dbReference>
<dbReference type="RefSeq" id="NP_037106.1">
    <property type="nucleotide sequence ID" value="NM_012974.1"/>
</dbReference>
<dbReference type="PDB" id="5LF2">
    <property type="method" value="X-ray"/>
    <property type="resolution" value="1.85 A"/>
    <property type="chains" value="A/B=523-833"/>
</dbReference>
<dbReference type="PDBsum" id="5LF2"/>
<dbReference type="SMR" id="P15800"/>
<dbReference type="FunCoup" id="P15800">
    <property type="interactions" value="786"/>
</dbReference>
<dbReference type="STRING" id="10116.ENSRNOP00000065052"/>
<dbReference type="GlyCosmos" id="P15800">
    <property type="glycosylation" value="7 sites, 11 glycans"/>
</dbReference>
<dbReference type="GlyGen" id="P15800">
    <property type="glycosylation" value="7 sites, 11 N-linked glycans (4 sites)"/>
</dbReference>
<dbReference type="iPTMnet" id="P15800"/>
<dbReference type="PhosphoSitePlus" id="P15800"/>
<dbReference type="PaxDb" id="10116-ENSRNOP00000065052"/>
<dbReference type="GeneID" id="25473"/>
<dbReference type="KEGG" id="rno:25473"/>
<dbReference type="AGR" id="RGD:2988"/>
<dbReference type="CTD" id="3913"/>
<dbReference type="RGD" id="2988">
    <property type="gene designation" value="Lamb2"/>
</dbReference>
<dbReference type="eggNOG" id="KOG0994">
    <property type="taxonomic scope" value="Eukaryota"/>
</dbReference>
<dbReference type="InParanoid" id="P15800"/>
<dbReference type="PhylomeDB" id="P15800"/>
<dbReference type="PRO" id="PR:P15800"/>
<dbReference type="Proteomes" id="UP000002494">
    <property type="component" value="Unplaced"/>
</dbReference>
<dbReference type="GO" id="GO:0005604">
    <property type="term" value="C:basement membrane"/>
    <property type="evidence" value="ECO:0000266"/>
    <property type="project" value="RGD"/>
</dbReference>
<dbReference type="GO" id="GO:0043256">
    <property type="term" value="C:laminin complex"/>
    <property type="evidence" value="ECO:0000266"/>
    <property type="project" value="RGD"/>
</dbReference>
<dbReference type="GO" id="GO:0005608">
    <property type="term" value="C:laminin-3 complex"/>
    <property type="evidence" value="ECO:0000266"/>
    <property type="project" value="RGD"/>
</dbReference>
<dbReference type="GO" id="GO:0031594">
    <property type="term" value="C:neuromuscular junction"/>
    <property type="evidence" value="ECO:0000266"/>
    <property type="project" value="RGD"/>
</dbReference>
<dbReference type="GO" id="GO:0045202">
    <property type="term" value="C:synapse"/>
    <property type="evidence" value="ECO:0000266"/>
    <property type="project" value="RGD"/>
</dbReference>
<dbReference type="GO" id="GO:0043083">
    <property type="term" value="C:synaptic cleft"/>
    <property type="evidence" value="ECO:0000266"/>
    <property type="project" value="RGD"/>
</dbReference>
<dbReference type="GO" id="GO:0005178">
    <property type="term" value="F:integrin binding"/>
    <property type="evidence" value="ECO:0000266"/>
    <property type="project" value="RGD"/>
</dbReference>
<dbReference type="GO" id="GO:0150043">
    <property type="term" value="F:structural constituent of synapse-associated extracellular matrix"/>
    <property type="evidence" value="ECO:0000266"/>
    <property type="project" value="RGD"/>
</dbReference>
<dbReference type="GO" id="GO:0009887">
    <property type="term" value="P:animal organ morphogenesis"/>
    <property type="evidence" value="ECO:0000318"/>
    <property type="project" value="GO_Central"/>
</dbReference>
<dbReference type="GO" id="GO:0014002">
    <property type="term" value="P:astrocyte development"/>
    <property type="evidence" value="ECO:0000266"/>
    <property type="project" value="RGD"/>
</dbReference>
<dbReference type="GO" id="GO:0048677">
    <property type="term" value="P:axon extension involved in regeneration"/>
    <property type="evidence" value="ECO:0000266"/>
    <property type="project" value="RGD"/>
</dbReference>
<dbReference type="GO" id="GO:0007411">
    <property type="term" value="P:axon guidance"/>
    <property type="evidence" value="ECO:0000266"/>
    <property type="project" value="RGD"/>
</dbReference>
<dbReference type="GO" id="GO:0070831">
    <property type="term" value="P:basement membrane assembly"/>
    <property type="evidence" value="ECO:0000318"/>
    <property type="project" value="GO_Central"/>
</dbReference>
<dbReference type="GO" id="GO:0016477">
    <property type="term" value="P:cell migration"/>
    <property type="evidence" value="ECO:0000318"/>
    <property type="project" value="GO_Central"/>
</dbReference>
<dbReference type="GO" id="GO:0000902">
    <property type="term" value="P:cell morphogenesis"/>
    <property type="evidence" value="ECO:0000266"/>
    <property type="project" value="RGD"/>
</dbReference>
<dbReference type="GO" id="GO:0072274">
    <property type="term" value="P:metanephric glomerular basement membrane development"/>
    <property type="evidence" value="ECO:0000266"/>
    <property type="project" value="RGD"/>
</dbReference>
<dbReference type="GO" id="GO:0072249">
    <property type="term" value="P:metanephric podocyte development"/>
    <property type="evidence" value="ECO:0000266"/>
    <property type="project" value="RGD"/>
</dbReference>
<dbReference type="GO" id="GO:0007528">
    <property type="term" value="P:neuromuscular junction development"/>
    <property type="evidence" value="ECO:0000266"/>
    <property type="project" value="RGD"/>
</dbReference>
<dbReference type="GO" id="GO:0031175">
    <property type="term" value="P:neuron projection development"/>
    <property type="evidence" value="ECO:0000266"/>
    <property type="project" value="RGD"/>
</dbReference>
<dbReference type="GO" id="GO:0060041">
    <property type="term" value="P:retina development in camera-type eye"/>
    <property type="evidence" value="ECO:0000266"/>
    <property type="project" value="RGD"/>
</dbReference>
<dbReference type="GO" id="GO:0014044">
    <property type="term" value="P:Schwann cell development"/>
    <property type="evidence" value="ECO:0000266"/>
    <property type="project" value="RGD"/>
</dbReference>
<dbReference type="GO" id="GO:0034446">
    <property type="term" value="P:substrate adhesion-dependent cell spreading"/>
    <property type="evidence" value="ECO:0000318"/>
    <property type="project" value="GO_Central"/>
</dbReference>
<dbReference type="GO" id="GO:0050808">
    <property type="term" value="P:synapse organization"/>
    <property type="evidence" value="ECO:0000266"/>
    <property type="project" value="RGD"/>
</dbReference>
<dbReference type="GO" id="GO:0009888">
    <property type="term" value="P:tissue development"/>
    <property type="evidence" value="ECO:0000318"/>
    <property type="project" value="GO_Central"/>
</dbReference>
<dbReference type="GO" id="GO:0007601">
    <property type="term" value="P:visual perception"/>
    <property type="evidence" value="ECO:0000266"/>
    <property type="project" value="RGD"/>
</dbReference>
<dbReference type="CDD" id="cd22299">
    <property type="entry name" value="cc_LAMB2_C"/>
    <property type="match status" value="1"/>
</dbReference>
<dbReference type="CDD" id="cd00055">
    <property type="entry name" value="EGF_Lam"/>
    <property type="match status" value="13"/>
</dbReference>
<dbReference type="FunFam" id="2.10.25.10:FF:000011">
    <property type="entry name" value="Cadherin EGF LAG seven-pass G-type receptor"/>
    <property type="match status" value="1"/>
</dbReference>
<dbReference type="FunFam" id="2.10.25.10:FF:000084">
    <property type="entry name" value="Laminin subunit alpha 3"/>
    <property type="match status" value="1"/>
</dbReference>
<dbReference type="FunFam" id="2.10.25.10:FF:000209">
    <property type="entry name" value="Laminin subunit alpha 5"/>
    <property type="match status" value="1"/>
</dbReference>
<dbReference type="FunFam" id="2.10.25.10:FF:000065">
    <property type="entry name" value="Laminin subunit beta 1"/>
    <property type="match status" value="1"/>
</dbReference>
<dbReference type="FunFam" id="2.10.25.10:FF:000101">
    <property type="entry name" value="Laminin subunit beta 1"/>
    <property type="match status" value="1"/>
</dbReference>
<dbReference type="FunFam" id="2.10.25.10:FF:000130">
    <property type="entry name" value="Laminin subunit beta 1"/>
    <property type="match status" value="1"/>
</dbReference>
<dbReference type="FunFam" id="2.10.25.10:FF:000138">
    <property type="entry name" value="Laminin subunit beta 1"/>
    <property type="match status" value="1"/>
</dbReference>
<dbReference type="FunFam" id="2.10.25.10:FF:000145">
    <property type="entry name" value="Laminin subunit beta 1"/>
    <property type="match status" value="1"/>
</dbReference>
<dbReference type="FunFam" id="2.170.300.10:FF:000004">
    <property type="entry name" value="Laminin subunit beta 1"/>
    <property type="match status" value="1"/>
</dbReference>
<dbReference type="FunFam" id="2.60.120.260:FF:000010">
    <property type="entry name" value="Laminin subunit beta 1"/>
    <property type="match status" value="1"/>
</dbReference>
<dbReference type="FunFam" id="2.10.25.10:FF:000135">
    <property type="entry name" value="Laminin subunit beta 4"/>
    <property type="match status" value="2"/>
</dbReference>
<dbReference type="FunFam" id="2.10.25.10:FF:000280">
    <property type="entry name" value="Laminin subunit beta 4"/>
    <property type="match status" value="1"/>
</dbReference>
<dbReference type="FunFam" id="2.170.300.10:FF:000001">
    <property type="entry name" value="Laminin subunit beta-1"/>
    <property type="match status" value="1"/>
</dbReference>
<dbReference type="FunFam" id="2.10.25.10:FF:000333">
    <property type="entry name" value="netrin-4 isoform X2"/>
    <property type="match status" value="1"/>
</dbReference>
<dbReference type="Gene3D" id="2.60.120.260">
    <property type="entry name" value="Galactose-binding domain-like"/>
    <property type="match status" value="1"/>
</dbReference>
<dbReference type="Gene3D" id="2.10.25.10">
    <property type="entry name" value="Laminin"/>
    <property type="match status" value="9"/>
</dbReference>
<dbReference type="Gene3D" id="2.170.300.10">
    <property type="entry name" value="Tie2 ligand-binding domain superfamily"/>
    <property type="match status" value="2"/>
</dbReference>
<dbReference type="InterPro" id="IPR000742">
    <property type="entry name" value="EGF-like_dom"/>
</dbReference>
<dbReference type="InterPro" id="IPR056558">
    <property type="entry name" value="LAMB1-4_helical"/>
</dbReference>
<dbReference type="InterPro" id="IPR050440">
    <property type="entry name" value="Laminin/Netrin_ECM"/>
</dbReference>
<dbReference type="InterPro" id="IPR013015">
    <property type="entry name" value="Laminin_IV_B"/>
</dbReference>
<dbReference type="InterPro" id="IPR008211">
    <property type="entry name" value="Laminin_N"/>
</dbReference>
<dbReference type="InterPro" id="IPR002049">
    <property type="entry name" value="LE_dom"/>
</dbReference>
<dbReference type="InterPro" id="IPR056863">
    <property type="entry name" value="LMN_ATRN_NET-like_EGF"/>
</dbReference>
<dbReference type="PANTHER" id="PTHR10574:SF36">
    <property type="entry name" value="LAMININ SUBUNIT BETA-2"/>
    <property type="match status" value="1"/>
</dbReference>
<dbReference type="PANTHER" id="PTHR10574">
    <property type="entry name" value="NETRIN/LAMININ-RELATED"/>
    <property type="match status" value="1"/>
</dbReference>
<dbReference type="Pfam" id="PF00053">
    <property type="entry name" value="EGF_laminin"/>
    <property type="match status" value="11"/>
</dbReference>
<dbReference type="Pfam" id="PF24973">
    <property type="entry name" value="EGF_LMN_ATRN"/>
    <property type="match status" value="2"/>
</dbReference>
<dbReference type="Pfam" id="PF23219">
    <property type="entry name" value="LAMB1"/>
    <property type="match status" value="1"/>
</dbReference>
<dbReference type="Pfam" id="PF21199">
    <property type="entry name" value="LAMININ_IV_B"/>
    <property type="match status" value="1"/>
</dbReference>
<dbReference type="Pfam" id="PF00055">
    <property type="entry name" value="Laminin_N"/>
    <property type="match status" value="1"/>
</dbReference>
<dbReference type="PRINTS" id="PR00011">
    <property type="entry name" value="EGFLAMININ"/>
</dbReference>
<dbReference type="SMART" id="SM00181">
    <property type="entry name" value="EGF"/>
    <property type="match status" value="10"/>
</dbReference>
<dbReference type="SMART" id="SM00180">
    <property type="entry name" value="EGF_Lam"/>
    <property type="match status" value="13"/>
</dbReference>
<dbReference type="SMART" id="SM00136">
    <property type="entry name" value="LamNT"/>
    <property type="match status" value="1"/>
</dbReference>
<dbReference type="SUPFAM" id="SSF57196">
    <property type="entry name" value="EGF/Laminin"/>
    <property type="match status" value="13"/>
</dbReference>
<dbReference type="PROSITE" id="PS00022">
    <property type="entry name" value="EGF_1"/>
    <property type="match status" value="10"/>
</dbReference>
<dbReference type="PROSITE" id="PS01186">
    <property type="entry name" value="EGF_2"/>
    <property type="match status" value="2"/>
</dbReference>
<dbReference type="PROSITE" id="PS01248">
    <property type="entry name" value="EGF_LAM_1"/>
    <property type="match status" value="12"/>
</dbReference>
<dbReference type="PROSITE" id="PS50027">
    <property type="entry name" value="EGF_LAM_2"/>
    <property type="match status" value="13"/>
</dbReference>
<dbReference type="PROSITE" id="PS51116">
    <property type="entry name" value="LAMININ_IVB"/>
    <property type="match status" value="1"/>
</dbReference>
<dbReference type="PROSITE" id="PS51117">
    <property type="entry name" value="LAMININ_NTER"/>
    <property type="match status" value="1"/>
</dbReference>
<keyword id="KW-0002">3D-structure</keyword>
<keyword id="KW-0084">Basement membrane</keyword>
<keyword id="KW-0130">Cell adhesion</keyword>
<keyword id="KW-0175">Coiled coil</keyword>
<keyword id="KW-1015">Disulfide bond</keyword>
<keyword id="KW-0272">Extracellular matrix</keyword>
<keyword id="KW-0325">Glycoprotein</keyword>
<keyword id="KW-0424">Laminin EGF-like domain</keyword>
<keyword id="KW-0597">Phosphoprotein</keyword>
<keyword id="KW-1185">Reference proteome</keyword>
<keyword id="KW-0677">Repeat</keyword>
<keyword id="KW-0964">Secreted</keyword>
<keyword id="KW-0732">Signal</keyword>
<proteinExistence type="evidence at protein level"/>
<protein>
    <recommendedName>
        <fullName>Laminin subunit beta-2</fullName>
    </recommendedName>
    <alternativeName>
        <fullName>Laminin chain B3</fullName>
    </alternativeName>
    <alternativeName>
        <fullName>Laminin-11 subunit beta</fullName>
    </alternativeName>
    <alternativeName>
        <fullName>Laminin-14 subunit beta</fullName>
    </alternativeName>
    <alternativeName>
        <fullName>Laminin-15 subunit beta</fullName>
    </alternativeName>
    <alternativeName>
        <fullName>Laminin-3 subunit beta</fullName>
    </alternativeName>
    <alternativeName>
        <fullName>Laminin-4 subunit beta</fullName>
    </alternativeName>
    <alternativeName>
        <fullName>Laminin-7 subunit beta</fullName>
    </alternativeName>
    <alternativeName>
        <fullName>Laminin-9 subunit beta</fullName>
    </alternativeName>
    <alternativeName>
        <fullName>S-laminin subunit beta</fullName>
        <shortName>S-LAM beta</shortName>
    </alternativeName>
</protein>